<organism>
    <name type="scientific">Methanococcus vannielii (strain ATCC 35089 / DSM 1224 / JCM 13029 / OCM 148 / SB)</name>
    <dbReference type="NCBI Taxonomy" id="406327"/>
    <lineage>
        <taxon>Archaea</taxon>
        <taxon>Methanobacteriati</taxon>
        <taxon>Methanobacteriota</taxon>
        <taxon>Methanomada group</taxon>
        <taxon>Methanococci</taxon>
        <taxon>Methanococcales</taxon>
        <taxon>Methanococcaceae</taxon>
        <taxon>Methanococcus</taxon>
    </lineage>
</organism>
<protein>
    <recommendedName>
        <fullName evidence="1">Glutamyl-tRNA(Gln) amidotransferase subunit E</fullName>
        <shortName evidence="1">Glu-ADT subunit E</shortName>
        <ecNumber evidence="1">6.3.5.-</ecNumber>
    </recommendedName>
</protein>
<evidence type="ECO:0000255" key="1">
    <source>
        <dbReference type="HAMAP-Rule" id="MF_00588"/>
    </source>
</evidence>
<name>GATE_METVS</name>
<gene>
    <name evidence="1" type="primary">gatE</name>
    <name type="ordered locus">Mevan_0578</name>
</gene>
<sequence length="633" mass="71126">MDYDYEKLGLKVGLEIHQQLNTKRKLFCNCPTKIRDDEPHGEIERFLRPSQSEMGQVDKAAILESRKEKKFIYQYYNDTTCLVELDDEPPHNVSEEGLNTALEVSTLMNMNFADEIHVMRKMVIDGSNTSGFQRTMFVSQDGFIETEYGKIRITSLCLEEDSCKKVEDGRDYTKYCVDRLGIPLLEITTEPDITSPKMGKEAARRIGTILRATGKVKRGLGTIRQDVNISIKNGARIEVKGVQNLDLIEKIIENEVTRQVSLNNLKEELIGRNAEVLDEIIDVTELLNDTESKVLRGALKNKGVIKAILLKGFSGLIGKEVQPGRRLGTEFSDRGKVLGGVGGLFHTDELPKYGITDEEVNKLKKFMNCGENDAVILVADAKNKAERALLAVIERAKESLIGIPEETRKALDDGNTSYLRPLPGAARMYPETDVPKILITSEICERIKNNLPEMPEEKTIRFIKEYELNEDLAKQMVMSYNVELFENLSKKYPNIKPTLIATTLEATLKEIKREGLDTEVLTDEHLNELFLGLSEDKMSKEAIPEVIKGYINNPNMKLDEVLDVAGLSKMSKEEVEAVILDIINQNILIVNEKGMGATGLLMGRCMAQLRGKADGKLINVTLQNKLKEKVQGQ</sequence>
<proteinExistence type="inferred from homology"/>
<feature type="chain" id="PRO_1000025482" description="Glutamyl-tRNA(Gln) amidotransferase subunit E">
    <location>
        <begin position="1"/>
        <end position="633"/>
    </location>
</feature>
<comment type="function">
    <text evidence="1">Allows the formation of correctly charged Gln-tRNA(Gln) through the transamidation of misacylated Glu-tRNA(Gln) in organisms which lack glutaminyl-tRNA synthetase. The reaction takes place in the presence of glutamine and ATP through an activated gamma-phospho-Glu-tRNA(Gln). The GatDE system is specific for glutamate and does not act on aspartate.</text>
</comment>
<comment type="catalytic activity">
    <reaction evidence="1">
        <text>L-glutamyl-tRNA(Gln) + L-glutamine + ATP + H2O = L-glutaminyl-tRNA(Gln) + L-glutamate + ADP + phosphate + H(+)</text>
        <dbReference type="Rhea" id="RHEA:17521"/>
        <dbReference type="Rhea" id="RHEA-COMP:9681"/>
        <dbReference type="Rhea" id="RHEA-COMP:9684"/>
        <dbReference type="ChEBI" id="CHEBI:15377"/>
        <dbReference type="ChEBI" id="CHEBI:15378"/>
        <dbReference type="ChEBI" id="CHEBI:29985"/>
        <dbReference type="ChEBI" id="CHEBI:30616"/>
        <dbReference type="ChEBI" id="CHEBI:43474"/>
        <dbReference type="ChEBI" id="CHEBI:58359"/>
        <dbReference type="ChEBI" id="CHEBI:78520"/>
        <dbReference type="ChEBI" id="CHEBI:78521"/>
        <dbReference type="ChEBI" id="CHEBI:456216"/>
    </reaction>
</comment>
<comment type="subunit">
    <text evidence="1">Heterodimer of GatD and GatE.</text>
</comment>
<comment type="similarity">
    <text evidence="1">Belongs to the GatB/GatE family. GatE subfamily.</text>
</comment>
<accession>A6UPR3</accession>
<dbReference type="EC" id="6.3.5.-" evidence="1"/>
<dbReference type="EMBL" id="CP000742">
    <property type="protein sequence ID" value="ABR54485.1"/>
    <property type="molecule type" value="Genomic_DNA"/>
</dbReference>
<dbReference type="RefSeq" id="WP_011972388.1">
    <property type="nucleotide sequence ID" value="NC_009634.1"/>
</dbReference>
<dbReference type="SMR" id="A6UPR3"/>
<dbReference type="STRING" id="406327.Mevan_0578"/>
<dbReference type="GeneID" id="5326034"/>
<dbReference type="KEGG" id="mvn:Mevan_0578"/>
<dbReference type="eggNOG" id="arCOG01719">
    <property type="taxonomic scope" value="Archaea"/>
</dbReference>
<dbReference type="HOGENOM" id="CLU_030702_0_0_2"/>
<dbReference type="OrthoDB" id="7316at2157"/>
<dbReference type="Proteomes" id="UP000001107">
    <property type="component" value="Chromosome"/>
</dbReference>
<dbReference type="GO" id="GO:0005737">
    <property type="term" value="C:cytoplasm"/>
    <property type="evidence" value="ECO:0007669"/>
    <property type="project" value="InterPro"/>
</dbReference>
<dbReference type="GO" id="GO:0004812">
    <property type="term" value="F:aminoacyl-tRNA ligase activity"/>
    <property type="evidence" value="ECO:0007669"/>
    <property type="project" value="InterPro"/>
</dbReference>
<dbReference type="GO" id="GO:0005524">
    <property type="term" value="F:ATP binding"/>
    <property type="evidence" value="ECO:0007669"/>
    <property type="project" value="UniProtKB-KW"/>
</dbReference>
<dbReference type="GO" id="GO:0050567">
    <property type="term" value="F:glutaminyl-tRNA synthase (glutamine-hydrolyzing) activity"/>
    <property type="evidence" value="ECO:0007669"/>
    <property type="project" value="UniProtKB-UniRule"/>
</dbReference>
<dbReference type="GO" id="GO:0070681">
    <property type="term" value="P:glutaminyl-tRNAGln biosynthesis via transamidation"/>
    <property type="evidence" value="ECO:0007669"/>
    <property type="project" value="TreeGrafter"/>
</dbReference>
<dbReference type="GO" id="GO:0006412">
    <property type="term" value="P:translation"/>
    <property type="evidence" value="ECO:0007669"/>
    <property type="project" value="UniProtKB-UniRule"/>
</dbReference>
<dbReference type="Gene3D" id="1.10.10.410">
    <property type="match status" value="1"/>
</dbReference>
<dbReference type="Gene3D" id="3.30.1360.30">
    <property type="entry name" value="GAD-like domain"/>
    <property type="match status" value="1"/>
</dbReference>
<dbReference type="Gene3D" id="1.10.150.380">
    <property type="entry name" value="GatB domain, N-terminal subdomain"/>
    <property type="match status" value="1"/>
</dbReference>
<dbReference type="HAMAP" id="MF_00588">
    <property type="entry name" value="GatE"/>
    <property type="match status" value="1"/>
</dbReference>
<dbReference type="InterPro" id="IPR017959">
    <property type="entry name" value="Asn/Gln-tRNA_amidoTrfase_suB/E"/>
</dbReference>
<dbReference type="InterPro" id="IPR006075">
    <property type="entry name" value="Asn/Gln-tRNA_Trfase_suB/E_cat"/>
</dbReference>
<dbReference type="InterPro" id="IPR018027">
    <property type="entry name" value="Asn/Gln_amidotransferase"/>
</dbReference>
<dbReference type="InterPro" id="IPR003789">
    <property type="entry name" value="Asn/Gln_tRNA_amidoTrase-B-like"/>
</dbReference>
<dbReference type="InterPro" id="IPR004115">
    <property type="entry name" value="GAD-like_sf"/>
</dbReference>
<dbReference type="InterPro" id="IPR029351">
    <property type="entry name" value="GAD_dom"/>
</dbReference>
<dbReference type="InterPro" id="IPR042114">
    <property type="entry name" value="GatB_C_1"/>
</dbReference>
<dbReference type="InterPro" id="IPR023168">
    <property type="entry name" value="GatB_Yqey_C_2"/>
</dbReference>
<dbReference type="InterPro" id="IPR004414">
    <property type="entry name" value="GatE"/>
</dbReference>
<dbReference type="InterPro" id="IPR017958">
    <property type="entry name" value="Gln-tRNA_amidoTrfase_suB_CS"/>
</dbReference>
<dbReference type="InterPro" id="IPR014746">
    <property type="entry name" value="Gln_synth/guanido_kin_cat_dom"/>
</dbReference>
<dbReference type="NCBIfam" id="TIGR00134">
    <property type="entry name" value="gatE_arch"/>
    <property type="match status" value="1"/>
</dbReference>
<dbReference type="NCBIfam" id="NF003107">
    <property type="entry name" value="PRK04028.1"/>
    <property type="match status" value="1"/>
</dbReference>
<dbReference type="PANTHER" id="PTHR11659">
    <property type="entry name" value="GLUTAMYL-TRNA GLN AMIDOTRANSFERASE SUBUNIT B MITOCHONDRIAL AND PROKARYOTIC PET112-RELATED"/>
    <property type="match status" value="1"/>
</dbReference>
<dbReference type="PANTHER" id="PTHR11659:SF2">
    <property type="entry name" value="GLUTAMYL-TRNA(GLN) AMIDOTRANSFERASE SUBUNIT E"/>
    <property type="match status" value="1"/>
</dbReference>
<dbReference type="Pfam" id="PF02938">
    <property type="entry name" value="GAD"/>
    <property type="match status" value="1"/>
</dbReference>
<dbReference type="Pfam" id="PF02934">
    <property type="entry name" value="GatB_N"/>
    <property type="match status" value="1"/>
</dbReference>
<dbReference type="Pfam" id="PF02637">
    <property type="entry name" value="GatB_Yqey"/>
    <property type="match status" value="1"/>
</dbReference>
<dbReference type="SMART" id="SM00845">
    <property type="entry name" value="GatB_Yqey"/>
    <property type="match status" value="1"/>
</dbReference>
<dbReference type="SUPFAM" id="SSF55261">
    <property type="entry name" value="GAD domain-like"/>
    <property type="match status" value="1"/>
</dbReference>
<dbReference type="SUPFAM" id="SSF89095">
    <property type="entry name" value="GatB/YqeY motif"/>
    <property type="match status" value="1"/>
</dbReference>
<dbReference type="SUPFAM" id="SSF55931">
    <property type="entry name" value="Glutamine synthetase/guanido kinase"/>
    <property type="match status" value="1"/>
</dbReference>
<dbReference type="PROSITE" id="PS01234">
    <property type="entry name" value="GATB"/>
    <property type="match status" value="1"/>
</dbReference>
<reference key="1">
    <citation type="submission" date="2007-06" db="EMBL/GenBank/DDBJ databases">
        <title>Complete sequence of Methanococcus vannielii SB.</title>
        <authorList>
            <consortium name="US DOE Joint Genome Institute"/>
            <person name="Copeland A."/>
            <person name="Lucas S."/>
            <person name="Lapidus A."/>
            <person name="Barry K."/>
            <person name="Glavina del Rio T."/>
            <person name="Dalin E."/>
            <person name="Tice H."/>
            <person name="Pitluck S."/>
            <person name="Chain P."/>
            <person name="Malfatti S."/>
            <person name="Shin M."/>
            <person name="Vergez L."/>
            <person name="Schmutz J."/>
            <person name="Larimer F."/>
            <person name="Land M."/>
            <person name="Hauser L."/>
            <person name="Kyrpides N."/>
            <person name="Anderson I."/>
            <person name="Sieprawska-Lupa M."/>
            <person name="Whitman W.B."/>
            <person name="Richardson P."/>
        </authorList>
    </citation>
    <scope>NUCLEOTIDE SEQUENCE [LARGE SCALE GENOMIC DNA]</scope>
    <source>
        <strain>ATCC 35089 / DSM 1224 / JCM 13029 / OCM 148 / SB</strain>
    </source>
</reference>
<keyword id="KW-0067">ATP-binding</keyword>
<keyword id="KW-0436">Ligase</keyword>
<keyword id="KW-0547">Nucleotide-binding</keyword>
<keyword id="KW-0648">Protein biosynthesis</keyword>